<name>BETA_STAAB</name>
<keyword id="KW-0274">FAD</keyword>
<keyword id="KW-0285">Flavoprotein</keyword>
<keyword id="KW-0520">NAD</keyword>
<keyword id="KW-0560">Oxidoreductase</keyword>
<accession>Q2YWJ5</accession>
<protein>
    <recommendedName>
        <fullName evidence="1">Oxygen-dependent choline dehydrogenase</fullName>
        <shortName evidence="1">CDH</shortName>
        <shortName evidence="1">CHD</shortName>
        <ecNumber evidence="1">1.1.99.1</ecNumber>
    </recommendedName>
    <alternativeName>
        <fullName evidence="1">Betaine aldehyde dehydrogenase</fullName>
        <shortName evidence="1">BADH</shortName>
        <ecNumber evidence="1">1.2.1.8</ecNumber>
    </alternativeName>
</protein>
<comment type="function">
    <text evidence="1">Involved in the biosynthesis of the osmoprotectant glycine betaine. Catalyzes the oxidation of choline to betaine aldehyde and betaine aldehyde to glycine betaine at the same rate.</text>
</comment>
<comment type="catalytic activity">
    <reaction evidence="1">
        <text>choline + A = betaine aldehyde + AH2</text>
        <dbReference type="Rhea" id="RHEA:17433"/>
        <dbReference type="ChEBI" id="CHEBI:13193"/>
        <dbReference type="ChEBI" id="CHEBI:15354"/>
        <dbReference type="ChEBI" id="CHEBI:15710"/>
        <dbReference type="ChEBI" id="CHEBI:17499"/>
        <dbReference type="EC" id="1.1.99.1"/>
    </reaction>
</comment>
<comment type="catalytic activity">
    <reaction evidence="1">
        <text>betaine aldehyde + NAD(+) + H2O = glycine betaine + NADH + 2 H(+)</text>
        <dbReference type="Rhea" id="RHEA:15305"/>
        <dbReference type="ChEBI" id="CHEBI:15377"/>
        <dbReference type="ChEBI" id="CHEBI:15378"/>
        <dbReference type="ChEBI" id="CHEBI:15710"/>
        <dbReference type="ChEBI" id="CHEBI:17750"/>
        <dbReference type="ChEBI" id="CHEBI:57540"/>
        <dbReference type="ChEBI" id="CHEBI:57945"/>
        <dbReference type="EC" id="1.2.1.8"/>
    </reaction>
</comment>
<comment type="cofactor">
    <cofactor evidence="1">
        <name>FAD</name>
        <dbReference type="ChEBI" id="CHEBI:57692"/>
    </cofactor>
</comment>
<comment type="pathway">
    <text evidence="1">Amine and polyamine biosynthesis; betaine biosynthesis via choline pathway; betaine aldehyde from choline (cytochrome c reductase route): step 1/1.</text>
</comment>
<comment type="similarity">
    <text evidence="1">Belongs to the GMC oxidoreductase family.</text>
</comment>
<evidence type="ECO:0000255" key="1">
    <source>
        <dbReference type="HAMAP-Rule" id="MF_00750"/>
    </source>
</evidence>
<reference key="1">
    <citation type="journal article" date="2007" name="PLoS ONE">
        <title>Molecular correlates of host specialization in Staphylococcus aureus.</title>
        <authorList>
            <person name="Herron-Olson L."/>
            <person name="Fitzgerald J.R."/>
            <person name="Musser J.M."/>
            <person name="Kapur V."/>
        </authorList>
    </citation>
    <scope>NUCLEOTIDE SEQUENCE [LARGE SCALE GENOMIC DNA]</scope>
    <source>
        <strain>bovine RF122 / ET3-1</strain>
    </source>
</reference>
<dbReference type="EC" id="1.1.99.1" evidence="1"/>
<dbReference type="EC" id="1.2.1.8" evidence="1"/>
<dbReference type="EMBL" id="AJ938182">
    <property type="protein sequence ID" value="CAI82174.1"/>
    <property type="molecule type" value="Genomic_DNA"/>
</dbReference>
<dbReference type="RefSeq" id="WP_000066521.1">
    <property type="nucleotide sequence ID" value="NC_007622.1"/>
</dbReference>
<dbReference type="SMR" id="Q2YWJ5"/>
<dbReference type="KEGG" id="sab:SAB2486c"/>
<dbReference type="HOGENOM" id="CLU_002865_7_1_9"/>
<dbReference type="UniPathway" id="UPA00529">
    <property type="reaction ID" value="UER00385"/>
</dbReference>
<dbReference type="GO" id="GO:0016020">
    <property type="term" value="C:membrane"/>
    <property type="evidence" value="ECO:0007669"/>
    <property type="project" value="TreeGrafter"/>
</dbReference>
<dbReference type="GO" id="GO:0008802">
    <property type="term" value="F:betaine-aldehyde dehydrogenase (NAD+) activity"/>
    <property type="evidence" value="ECO:0007669"/>
    <property type="project" value="UniProtKB-EC"/>
</dbReference>
<dbReference type="GO" id="GO:0008812">
    <property type="term" value="F:choline dehydrogenase activity"/>
    <property type="evidence" value="ECO:0007669"/>
    <property type="project" value="UniProtKB-UniRule"/>
</dbReference>
<dbReference type="GO" id="GO:0050660">
    <property type="term" value="F:flavin adenine dinucleotide binding"/>
    <property type="evidence" value="ECO:0007669"/>
    <property type="project" value="InterPro"/>
</dbReference>
<dbReference type="GO" id="GO:0019285">
    <property type="term" value="P:glycine betaine biosynthetic process from choline"/>
    <property type="evidence" value="ECO:0007669"/>
    <property type="project" value="UniProtKB-UniRule"/>
</dbReference>
<dbReference type="Gene3D" id="3.50.50.60">
    <property type="entry name" value="FAD/NAD(P)-binding domain"/>
    <property type="match status" value="1"/>
</dbReference>
<dbReference type="Gene3D" id="3.30.560.10">
    <property type="entry name" value="Glucose Oxidase, domain 3"/>
    <property type="match status" value="1"/>
</dbReference>
<dbReference type="HAMAP" id="MF_00750">
    <property type="entry name" value="Choline_dehydrogen"/>
    <property type="match status" value="1"/>
</dbReference>
<dbReference type="InterPro" id="IPR011533">
    <property type="entry name" value="BetA"/>
</dbReference>
<dbReference type="InterPro" id="IPR036188">
    <property type="entry name" value="FAD/NAD-bd_sf"/>
</dbReference>
<dbReference type="InterPro" id="IPR012132">
    <property type="entry name" value="GMC_OxRdtase"/>
</dbReference>
<dbReference type="InterPro" id="IPR000172">
    <property type="entry name" value="GMC_OxRdtase_N"/>
</dbReference>
<dbReference type="InterPro" id="IPR007867">
    <property type="entry name" value="GMC_OxRtase_C"/>
</dbReference>
<dbReference type="NCBIfam" id="TIGR01810">
    <property type="entry name" value="betA"/>
    <property type="match status" value="1"/>
</dbReference>
<dbReference type="NCBIfam" id="NF002550">
    <property type="entry name" value="PRK02106.1"/>
    <property type="match status" value="1"/>
</dbReference>
<dbReference type="PANTHER" id="PTHR11552:SF147">
    <property type="entry name" value="CHOLINE DEHYDROGENASE, MITOCHONDRIAL"/>
    <property type="match status" value="1"/>
</dbReference>
<dbReference type="PANTHER" id="PTHR11552">
    <property type="entry name" value="GLUCOSE-METHANOL-CHOLINE GMC OXIDOREDUCTASE"/>
    <property type="match status" value="1"/>
</dbReference>
<dbReference type="Pfam" id="PF05199">
    <property type="entry name" value="GMC_oxred_C"/>
    <property type="match status" value="1"/>
</dbReference>
<dbReference type="Pfam" id="PF00732">
    <property type="entry name" value="GMC_oxred_N"/>
    <property type="match status" value="1"/>
</dbReference>
<dbReference type="PIRSF" id="PIRSF000137">
    <property type="entry name" value="Alcohol_oxidase"/>
    <property type="match status" value="1"/>
</dbReference>
<dbReference type="SUPFAM" id="SSF54373">
    <property type="entry name" value="FAD-linked reductases, C-terminal domain"/>
    <property type="match status" value="1"/>
</dbReference>
<dbReference type="SUPFAM" id="SSF51905">
    <property type="entry name" value="FAD/NAD(P)-binding domain"/>
    <property type="match status" value="1"/>
</dbReference>
<dbReference type="PROSITE" id="PS00623">
    <property type="entry name" value="GMC_OXRED_1"/>
    <property type="match status" value="1"/>
</dbReference>
<dbReference type="PROSITE" id="PS00624">
    <property type="entry name" value="GMC_OXRED_2"/>
    <property type="match status" value="1"/>
</dbReference>
<sequence>MSNKNKSYDYVIIGGGSAGSVLGNRLSEDKDKEVLVLEAGRSDYFWDLFIQMPAALMFPSGNKFYDWIYSTDEEPHMGGRKVAHARGKVLGGSSSINGMIYQRGNPMDYEGWAEPEGMETWDFAHCLPYFKKLEKTYGAAPYDKFRGHDGPIKLKRGPATNPLFQSFFDAGVEAGYHKTPDVNGFRQEGFGPFDSQVHRGRRMSASRAYLHPAMKRKNLTVETRAFVTEIHYEGRRATGVTYKKNGKLHTIDANEVILSGGAFNTPQLLQLSGIGDSEFLKSKGIEPRVHLPGVGENFEDHLEVYIQHKCKEPVSLQPSLDIKRMPFIGLQWIFTRTGAAASNHFEGGGFVRSNNEVDYPNLMFHFLPIAVRYDGQKAAVAHGYQVHVGPMYSNSRGSLKIKSKDPFEKPSIRFNYLSTEEDKKEWVEAIRVARNILSQKAMDPFNGGEISPGPEVQTDEEILDWVRRDGETALHPSCSAKMGPASDPMAVVDPLTMKVHGMENLRVVDASAMPRTTNGNIHAPVLMLAEKAADIIRGRKPLEPQYIDYYKHGVHDENEGAIEVKPYAK</sequence>
<gene>
    <name evidence="1" type="primary">betA</name>
    <name type="ordered locus">SAB2486c</name>
</gene>
<proteinExistence type="inferred from homology"/>
<organism>
    <name type="scientific">Staphylococcus aureus (strain bovine RF122 / ET3-1)</name>
    <dbReference type="NCBI Taxonomy" id="273036"/>
    <lineage>
        <taxon>Bacteria</taxon>
        <taxon>Bacillati</taxon>
        <taxon>Bacillota</taxon>
        <taxon>Bacilli</taxon>
        <taxon>Bacillales</taxon>
        <taxon>Staphylococcaceae</taxon>
        <taxon>Staphylococcus</taxon>
    </lineage>
</organism>
<feature type="chain" id="PRO_0000258934" description="Oxygen-dependent choline dehydrogenase">
    <location>
        <begin position="1"/>
        <end position="569"/>
    </location>
</feature>
<feature type="active site" description="Proton acceptor" evidence="1">
    <location>
        <position position="475"/>
    </location>
</feature>
<feature type="binding site" evidence="1">
    <location>
        <begin position="9"/>
        <end position="38"/>
    </location>
    <ligand>
        <name>FAD</name>
        <dbReference type="ChEBI" id="CHEBI:57692"/>
    </ligand>
</feature>